<reference key="1">
    <citation type="journal article" date="2001" name="Biochem. J.">
        <title>A large family of endosome-localized proteins related to sorting nexin 1.</title>
        <authorList>
            <person name="Teasdale R.D."/>
            <person name="Loci D."/>
            <person name="Houghton F."/>
            <person name="Karlsson L."/>
            <person name="Gleeson P.A."/>
        </authorList>
    </citation>
    <scope>NUCLEOTIDE SEQUENCE [MRNA]</scope>
</reference>
<reference key="2">
    <citation type="journal article" date="1999" name="J. Biol. Chem.">
        <title>Interaction of the metalloprotease disintegrins MDC9 and MDC15 with two SH3 domain-containing proteins, endophilin I and SH3PX1.</title>
        <authorList>
            <person name="Howard L."/>
            <person name="Nelson K.K."/>
            <person name="Maciewicz R.A."/>
            <person name="Blobel C.P."/>
        </authorList>
    </citation>
    <scope>NUCLEOTIDE SEQUENCE [MRNA]</scope>
    <scope>INTERACTION WITH ADAM9 AND ADAM15</scope>
    <scope>TISSUE SPECIFICITY</scope>
</reference>
<reference key="3">
    <citation type="submission" date="1999-07" db="EMBL/GenBank/DDBJ databases">
        <title>Identification of differentially expressed genes in matched prostate cancer and normal epithelial cell lines.</title>
        <authorList>
            <person name="Zhang J.S."/>
            <person name="Smith D.I."/>
        </authorList>
    </citation>
    <scope>NUCLEOTIDE SEQUENCE [MRNA]</scope>
</reference>
<reference key="4">
    <citation type="journal article" date="2003" name="Nature">
        <title>The DNA sequence and analysis of human chromosome 6.</title>
        <authorList>
            <person name="Mungall A.J."/>
            <person name="Palmer S.A."/>
            <person name="Sims S.K."/>
            <person name="Edwards C.A."/>
            <person name="Ashurst J.L."/>
            <person name="Wilming L."/>
            <person name="Jones M.C."/>
            <person name="Horton R."/>
            <person name="Hunt S.E."/>
            <person name="Scott C.E."/>
            <person name="Gilbert J.G.R."/>
            <person name="Clamp M.E."/>
            <person name="Bethel G."/>
            <person name="Milne S."/>
            <person name="Ainscough R."/>
            <person name="Almeida J.P."/>
            <person name="Ambrose K.D."/>
            <person name="Andrews T.D."/>
            <person name="Ashwell R.I.S."/>
            <person name="Babbage A.K."/>
            <person name="Bagguley C.L."/>
            <person name="Bailey J."/>
            <person name="Banerjee R."/>
            <person name="Barker D.J."/>
            <person name="Barlow K.F."/>
            <person name="Bates K."/>
            <person name="Beare D.M."/>
            <person name="Beasley H."/>
            <person name="Beasley O."/>
            <person name="Bird C.P."/>
            <person name="Blakey S.E."/>
            <person name="Bray-Allen S."/>
            <person name="Brook J."/>
            <person name="Brown A.J."/>
            <person name="Brown J.Y."/>
            <person name="Burford D.C."/>
            <person name="Burrill W."/>
            <person name="Burton J."/>
            <person name="Carder C."/>
            <person name="Carter N.P."/>
            <person name="Chapman J.C."/>
            <person name="Clark S.Y."/>
            <person name="Clark G."/>
            <person name="Clee C.M."/>
            <person name="Clegg S."/>
            <person name="Cobley V."/>
            <person name="Collier R.E."/>
            <person name="Collins J.E."/>
            <person name="Colman L.K."/>
            <person name="Corby N.R."/>
            <person name="Coville G.J."/>
            <person name="Culley K.M."/>
            <person name="Dhami P."/>
            <person name="Davies J."/>
            <person name="Dunn M."/>
            <person name="Earthrowl M.E."/>
            <person name="Ellington A.E."/>
            <person name="Evans K.A."/>
            <person name="Faulkner L."/>
            <person name="Francis M.D."/>
            <person name="Frankish A."/>
            <person name="Frankland J."/>
            <person name="French L."/>
            <person name="Garner P."/>
            <person name="Garnett J."/>
            <person name="Ghori M.J."/>
            <person name="Gilby L.M."/>
            <person name="Gillson C.J."/>
            <person name="Glithero R.J."/>
            <person name="Grafham D.V."/>
            <person name="Grant M."/>
            <person name="Gribble S."/>
            <person name="Griffiths C."/>
            <person name="Griffiths M.N.D."/>
            <person name="Hall R."/>
            <person name="Halls K.S."/>
            <person name="Hammond S."/>
            <person name="Harley J.L."/>
            <person name="Hart E.A."/>
            <person name="Heath P.D."/>
            <person name="Heathcott R."/>
            <person name="Holmes S.J."/>
            <person name="Howden P.J."/>
            <person name="Howe K.L."/>
            <person name="Howell G.R."/>
            <person name="Huckle E."/>
            <person name="Humphray S.J."/>
            <person name="Humphries M.D."/>
            <person name="Hunt A.R."/>
            <person name="Johnson C.M."/>
            <person name="Joy A.A."/>
            <person name="Kay M."/>
            <person name="Keenan S.J."/>
            <person name="Kimberley A.M."/>
            <person name="King A."/>
            <person name="Laird G.K."/>
            <person name="Langford C."/>
            <person name="Lawlor S."/>
            <person name="Leongamornlert D.A."/>
            <person name="Leversha M."/>
            <person name="Lloyd C.R."/>
            <person name="Lloyd D.M."/>
            <person name="Loveland J.E."/>
            <person name="Lovell J."/>
            <person name="Martin S."/>
            <person name="Mashreghi-Mohammadi M."/>
            <person name="Maslen G.L."/>
            <person name="Matthews L."/>
            <person name="McCann O.T."/>
            <person name="McLaren S.J."/>
            <person name="McLay K."/>
            <person name="McMurray A."/>
            <person name="Moore M.J.F."/>
            <person name="Mullikin J.C."/>
            <person name="Niblett D."/>
            <person name="Nickerson T."/>
            <person name="Novik K.L."/>
            <person name="Oliver K."/>
            <person name="Overton-Larty E.K."/>
            <person name="Parker A."/>
            <person name="Patel R."/>
            <person name="Pearce A.V."/>
            <person name="Peck A.I."/>
            <person name="Phillimore B.J.C.T."/>
            <person name="Phillips S."/>
            <person name="Plumb R.W."/>
            <person name="Porter K.M."/>
            <person name="Ramsey Y."/>
            <person name="Ranby S.A."/>
            <person name="Rice C.M."/>
            <person name="Ross M.T."/>
            <person name="Searle S.M."/>
            <person name="Sehra H.K."/>
            <person name="Sheridan E."/>
            <person name="Skuce C.D."/>
            <person name="Smith S."/>
            <person name="Smith M."/>
            <person name="Spraggon L."/>
            <person name="Squares S.L."/>
            <person name="Steward C.A."/>
            <person name="Sycamore N."/>
            <person name="Tamlyn-Hall G."/>
            <person name="Tester J."/>
            <person name="Theaker A.J."/>
            <person name="Thomas D.W."/>
            <person name="Thorpe A."/>
            <person name="Tracey A."/>
            <person name="Tromans A."/>
            <person name="Tubby B."/>
            <person name="Wall M."/>
            <person name="Wallis J.M."/>
            <person name="West A.P."/>
            <person name="White S.S."/>
            <person name="Whitehead S.L."/>
            <person name="Whittaker H."/>
            <person name="Wild A."/>
            <person name="Willey D.J."/>
            <person name="Wilmer T.E."/>
            <person name="Wood J.M."/>
            <person name="Wray P.W."/>
            <person name="Wyatt J.C."/>
            <person name="Young L."/>
            <person name="Younger R.M."/>
            <person name="Bentley D.R."/>
            <person name="Coulson A."/>
            <person name="Durbin R.M."/>
            <person name="Hubbard T."/>
            <person name="Sulston J.E."/>
            <person name="Dunham I."/>
            <person name="Rogers J."/>
            <person name="Beck S."/>
        </authorList>
    </citation>
    <scope>NUCLEOTIDE SEQUENCE [LARGE SCALE GENOMIC DNA]</scope>
</reference>
<reference key="5">
    <citation type="journal article" date="2004" name="Genome Res.">
        <title>The status, quality, and expansion of the NIH full-length cDNA project: the Mammalian Gene Collection (MGC).</title>
        <authorList>
            <consortium name="The MGC Project Team"/>
        </authorList>
    </citation>
    <scope>NUCLEOTIDE SEQUENCE [LARGE SCALE MRNA]</scope>
    <source>
        <tissue>Kidney</tissue>
        <tissue>Skin</tissue>
    </source>
</reference>
<reference key="6">
    <citation type="submission" date="1998-07" db="EMBL/GenBank/DDBJ databases">
        <title>Human SDP1.</title>
        <authorList>
            <person name="Ramanathan G."/>
            <person name="Subramaniam V.N."/>
            <person name="Hong W."/>
        </authorList>
    </citation>
    <scope>NUCLEOTIDE SEQUENCE [MRNA] OF 201-595</scope>
</reference>
<reference key="7">
    <citation type="journal article" date="2002" name="J. Biol. Chem.">
        <title>The Cdc42 target ACK2 interacts with sorting nexin 9 (SH3PX1) to regulate epidermal growth factor receptor degradation.</title>
        <authorList>
            <person name="Lin Q."/>
            <person name="Lo C.G."/>
            <person name="Cerione R.A."/>
            <person name="Yang W."/>
        </authorList>
    </citation>
    <scope>FUNCTION</scope>
    <scope>INTERACTION WITH TNK2</scope>
    <scope>IDENTIFICATION IN A COMPLEX WITH TNK2 AND CLATHRIN HEAVY CHAIN</scope>
    <scope>TYROSINE PHOSPHORYLATION</scope>
</reference>
<reference key="8">
    <citation type="journal article" date="2003" name="J. Biol. Chem.">
        <title>Sorting nexin 9 participates in clathrin-mediated endocytosis through interactions with the core components.</title>
        <authorList>
            <person name="Lundmark R."/>
            <person name="Carlsson S.R."/>
        </authorList>
    </citation>
    <scope>FUNCTION</scope>
    <scope>INTERACTION WITH DNM2 AND THE AP-2 COMPLEX</scope>
    <scope>IDENTIFICATION IN A COMPLEX WITH THE AP-2 COMPLEX; CLATHRIN AND DNM2</scope>
    <scope>SUBCELLULAR LOCATION</scope>
</reference>
<reference key="9">
    <citation type="journal article" date="2005" name="FEBS Lett.">
        <title>SNX9 as an adaptor for linking synaptojanin-1 to the Cdc42 effector ACK1.</title>
        <authorList>
            <person name="Yeow-Fong L."/>
            <person name="Lim L."/>
            <person name="Manser E."/>
        </authorList>
    </citation>
    <scope>INTERACTION WITH TNK2</scope>
    <scope>SUBCELLULAR LOCATION</scope>
</reference>
<reference key="10">
    <citation type="journal article" date="2005" name="Mol. Biol. Cell">
        <title>SNX9 regulates dynamin assembly and is required for efficient clathrin-mediated endocytosis.</title>
        <authorList>
            <person name="Soulet F."/>
            <person name="Yarar D."/>
            <person name="Leonard M."/>
            <person name="Schmid S.L."/>
        </authorList>
    </citation>
    <scope>FUNCTION</scope>
    <scope>SUBCELLULAR LOCATION</scope>
    <scope>IDENTIFICATION BY MASS SPECTROMETRY</scope>
    <scope>INTERACTION WITH DNM1 AND DNM2</scope>
</reference>
<reference key="11">
    <citation type="journal article" date="2006" name="Biochem. J.">
        <title>Dimerization is required for SH3PX1 tyrosine phosphorylation in response to epidermal growth factor signalling and interaction with ACK2.</title>
        <authorList>
            <person name="Childress C."/>
            <person name="Lin Q."/>
            <person name="Yang W."/>
        </authorList>
    </citation>
    <scope>SUBUNIT</scope>
    <scope>SUBCELLULAR LOCATION</scope>
    <scope>TYROSINE PHOSPHORYLATION</scope>
</reference>
<reference key="12">
    <citation type="journal article" date="2007" name="Dev. Cell">
        <title>SNX9 couples actin assembly to phosphoinositide signals and is required for membrane remodeling during endocytosis.</title>
        <authorList>
            <person name="Yarar D."/>
            <person name="Waterman-Storer C.M."/>
            <person name="Schmid S.L."/>
        </authorList>
    </citation>
    <scope>FUNCTION</scope>
    <scope>INTERACTION WITH WASL</scope>
    <scope>SUBCELLULAR LOCATION</scope>
    <scope>SUBUNIT</scope>
    <scope>PHOSPHATIDYLINOSITOL 4,5-BISPHOSPHATE BINDING</scope>
</reference>
<reference key="13">
    <citation type="journal article" date="2008" name="J. Cell Sci.">
        <title>SNX9 regulates tubular invagination of the plasma membrane through interaction with actin cytoskeleton and dynamin 2.</title>
        <authorList>
            <person name="Shin N."/>
            <person name="Ahn N."/>
            <person name="Chang-Ileto B."/>
            <person name="Park J."/>
            <person name="Takei K."/>
            <person name="Ahn S.G."/>
            <person name="Kim S.A."/>
            <person name="Di Paolo G."/>
            <person name="Chang S."/>
        </authorList>
    </citation>
    <scope>FUNCTION</scope>
    <scope>SUBCELLULAR LOCATION</scope>
    <scope>INTERACTION WITH ACTR3; WASL AND DNM2</scope>
</reference>
<reference key="14">
    <citation type="journal article" date="2009" name="BMC Immunol.">
        <title>Identification of SH3 domain interaction partners of human FasL (CD178) by phage display screening.</title>
        <authorList>
            <person name="Voss M."/>
            <person name="Lettau M."/>
            <person name="Janssen O."/>
        </authorList>
    </citation>
    <scope>INTERACTION WITH FASLG</scope>
</reference>
<reference key="15">
    <citation type="journal article" date="2009" name="Science">
        <title>Lysine acetylation targets protein complexes and co-regulates major cellular functions.</title>
        <authorList>
            <person name="Choudhary C."/>
            <person name="Kumar C."/>
            <person name="Gnad F."/>
            <person name="Nielsen M.L."/>
            <person name="Rehman M."/>
            <person name="Walther T.C."/>
            <person name="Olsen J.V."/>
            <person name="Mann M."/>
        </authorList>
    </citation>
    <scope>ACETYLATION [LARGE SCALE ANALYSIS] AT LYS-288</scope>
    <scope>IDENTIFICATION BY MASS SPECTROMETRY [LARGE SCALE ANALYSIS]</scope>
</reference>
<reference key="16">
    <citation type="journal article" date="2010" name="FEBS J.">
        <title>The E3 ubiquitin ligase Itch regulates sorting nexin 9 through an unconventional substrate recognition domain.</title>
        <authorList>
            <person name="Baumann C."/>
            <person name="Lindholm C.K."/>
            <person name="Rimoldi D."/>
            <person name="Levy F."/>
        </authorList>
    </citation>
    <scope>INTERACTION WITH ITCH</scope>
    <scope>UBIQUITINATION BY ITCH</scope>
</reference>
<reference key="17">
    <citation type="journal article" date="2010" name="J. Cell Sci.">
        <title>SNX18 shares a redundant role with SNX9 and modulates endocytic trafficking at the plasma membrane.</title>
        <authorList>
            <person name="Park J."/>
            <person name="Kim Y."/>
            <person name="Lee S."/>
            <person name="Park J.J."/>
            <person name="Park Z.Y."/>
            <person name="Sun W."/>
            <person name="Kim H."/>
            <person name="Chang S."/>
        </authorList>
    </citation>
    <scope>FUNCTION</scope>
    <scope>SUBUNIT</scope>
    <scope>SUBCELLULAR LOCATION</scope>
</reference>
<reference key="18">
    <citation type="journal article" date="2010" name="PLoS ONE">
        <title>The SNX-PX-BAR family in macropinocytosis: the regulation of macropinosome formation by SNX-PX-BAR proteins.</title>
        <authorList>
            <person name="Wang J.T."/>
            <person name="Kerr M.C."/>
            <person name="Karunaratne S."/>
            <person name="Jeanes A."/>
            <person name="Yap A.S."/>
            <person name="Teasdale R.D."/>
        </authorList>
    </citation>
    <scope>FUNCTION</scope>
    <scope>SUBCELLULAR LOCATION</scope>
</reference>
<reference key="19">
    <citation type="journal article" date="2011" name="BMC Syst. Biol.">
        <title>Initial characterization of the human central proteome.</title>
        <authorList>
            <person name="Burkard T.R."/>
            <person name="Planyavsky M."/>
            <person name="Kaupe I."/>
            <person name="Breitwieser F.P."/>
            <person name="Buerckstuemmer T."/>
            <person name="Bennett K.L."/>
            <person name="Superti-Furga G."/>
            <person name="Colinge J."/>
        </authorList>
    </citation>
    <scope>IDENTIFICATION BY MASS SPECTROMETRY [LARGE SCALE ANALYSIS]</scope>
</reference>
<reference key="20">
    <citation type="journal article" date="2012" name="J. Cell Sci.">
        <title>SNX9, SNX18 and SNX33 are required for progression through and completion of mitosis.</title>
        <authorList>
            <person name="Ma M.P."/>
            <person name="Chircop M."/>
        </authorList>
    </citation>
    <scope>FUNCTION</scope>
    <scope>SUBCELLULAR LOCATION</scope>
</reference>
<reference key="21">
    <citation type="journal article" date="2013" name="J. Proteome Res.">
        <title>Toward a comprehensive characterization of a human cancer cell phosphoproteome.</title>
        <authorList>
            <person name="Zhou H."/>
            <person name="Di Palma S."/>
            <person name="Preisinger C."/>
            <person name="Peng M."/>
            <person name="Polat A.N."/>
            <person name="Heck A.J."/>
            <person name="Mohammed S."/>
        </authorList>
    </citation>
    <scope>PHOSPHORYLATION [LARGE SCALE ANALYSIS] AT SER-116; SER-121; SER-197; SER-200 AND THR-216</scope>
    <scope>IDENTIFICATION BY MASS SPECTROMETRY [LARGE SCALE ANALYSIS]</scope>
    <source>
        <tissue>Cervix carcinoma</tissue>
        <tissue>Erythroleukemia</tissue>
    </source>
</reference>
<reference key="22">
    <citation type="journal article" date="2014" name="J. Proteomics">
        <title>An enzyme assisted RP-RPLC approach for in-depth analysis of human liver phosphoproteome.</title>
        <authorList>
            <person name="Bian Y."/>
            <person name="Song C."/>
            <person name="Cheng K."/>
            <person name="Dong M."/>
            <person name="Wang F."/>
            <person name="Huang J."/>
            <person name="Sun D."/>
            <person name="Wang L."/>
            <person name="Ye M."/>
            <person name="Zou H."/>
        </authorList>
    </citation>
    <scope>IDENTIFICATION BY MASS SPECTROMETRY [LARGE SCALE ANALYSIS]</scope>
    <source>
        <tissue>Liver</tissue>
    </source>
</reference>
<reference key="23">
    <citation type="journal article" date="2007" name="EMBO J.">
        <title>The PX-BAR membrane-remodeling unit of sorting nexin 9.</title>
        <authorList>
            <person name="Pylypenko O."/>
            <person name="Lundmark R."/>
            <person name="Rasmuson E."/>
            <person name="Carlsson S.R."/>
            <person name="Rak A."/>
        </authorList>
    </citation>
    <scope>X-RAY CRYSTALLOGRAPHY (2.45 ANGSTROMS) OF 204-595 IN COMPLEX WITH PHOSPHATIDYLINOSITOL 3-PHOSPHATE</scope>
    <scope>FUNCTION</scope>
    <scope>SUBUNIT</scope>
    <scope>DOMAIN</scope>
    <scope>SUBCELLULAR LOCATION</scope>
    <scope>MUTAGENESIS OF TYR-287; LYS-313; LYS-363; 366-LYS-ARG-367; LYS-522 AND LYS-528</scope>
</reference>
<reference key="24">
    <citation type="journal article" date="2008" name="Structure">
        <title>Structure and plasticity of Endophilin and Sorting Nexin 9.</title>
        <authorList>
            <person name="Wang Q."/>
            <person name="Kaan H.Y."/>
            <person name="Hooda R.N."/>
            <person name="Goh S.L."/>
            <person name="Sondermann H."/>
        </authorList>
    </citation>
    <scope>X-RAY CRYSTALLOGRAPHY (2.08 ANGSTROMS) OF 230-595</scope>
    <scope>SUBUNIT</scope>
</reference>
<reference key="25">
    <citation type="journal article" date="2010" name="J. Biol. Chem.">
        <title>Mechanism of aldolase control of sorting nexin 9 function in endocytosis.</title>
        <authorList>
            <person name="Rangarajan E.S."/>
            <person name="Park H."/>
            <person name="Fortin E."/>
            <person name="Sygusch J."/>
            <person name="Izard T."/>
        </authorList>
    </citation>
    <scope>X-RAY CRYSTALLOGRAPHY (2.2 ANGSTROMS) OF 152-182 IN COMPLEX WITH ALDOA</scope>
</reference>
<evidence type="ECO:0000250" key="1">
    <source>
        <dbReference type="UniProtKB" id="Q91VH2"/>
    </source>
</evidence>
<evidence type="ECO:0000255" key="2">
    <source>
        <dbReference type="PROSITE-ProRule" id="PRU00147"/>
    </source>
</evidence>
<evidence type="ECO:0000255" key="3">
    <source>
        <dbReference type="PROSITE-ProRule" id="PRU00192"/>
    </source>
</evidence>
<evidence type="ECO:0000256" key="4">
    <source>
        <dbReference type="SAM" id="MobiDB-lite"/>
    </source>
</evidence>
<evidence type="ECO:0000269" key="5">
    <source>
    </source>
</evidence>
<evidence type="ECO:0000269" key="6">
    <source>
    </source>
</evidence>
<evidence type="ECO:0000269" key="7">
    <source>
    </source>
</evidence>
<evidence type="ECO:0000269" key="8">
    <source>
    </source>
</evidence>
<evidence type="ECO:0000269" key="9">
    <source>
    </source>
</evidence>
<evidence type="ECO:0000269" key="10">
    <source>
    </source>
</evidence>
<evidence type="ECO:0000269" key="11">
    <source>
    </source>
</evidence>
<evidence type="ECO:0000269" key="12">
    <source>
    </source>
</evidence>
<evidence type="ECO:0000269" key="13">
    <source>
    </source>
</evidence>
<evidence type="ECO:0000269" key="14">
    <source>
    </source>
</evidence>
<evidence type="ECO:0000269" key="15">
    <source>
    </source>
</evidence>
<evidence type="ECO:0000269" key="16">
    <source>
    </source>
</evidence>
<evidence type="ECO:0000269" key="17">
    <source>
    </source>
</evidence>
<evidence type="ECO:0000269" key="18">
    <source>
    </source>
</evidence>
<evidence type="ECO:0000269" key="19">
    <source>
    </source>
</evidence>
<evidence type="ECO:0000269" key="20">
    <source>
    </source>
</evidence>
<evidence type="ECO:0000305" key="21"/>
<evidence type="ECO:0007744" key="22">
    <source>
        <dbReference type="PDB" id="2RAK"/>
    </source>
</evidence>
<evidence type="ECO:0007744" key="23">
    <source>
    </source>
</evidence>
<evidence type="ECO:0007744" key="24">
    <source>
    </source>
</evidence>
<evidence type="ECO:0007829" key="25">
    <source>
        <dbReference type="PDB" id="2RAJ"/>
    </source>
</evidence>
<evidence type="ECO:0007829" key="26">
    <source>
        <dbReference type="PDB" id="2RAK"/>
    </source>
</evidence>
<evidence type="ECO:0007829" key="27">
    <source>
        <dbReference type="PDB" id="3DYT"/>
    </source>
</evidence>
<evidence type="ECO:0007829" key="28">
    <source>
        <dbReference type="PDB" id="3LGE"/>
    </source>
</evidence>
<evidence type="ECO:0007829" key="29">
    <source>
        <dbReference type="PDB" id="7OJ9"/>
    </source>
</evidence>
<accession>Q9Y5X1</accession>
<accession>Q9BSI7</accession>
<accession>Q9BVM1</accession>
<accession>Q9UJH6</accession>
<accession>Q9UP20</accession>
<keyword id="KW-0002">3D-structure</keyword>
<keyword id="KW-0007">Acetylation</keyword>
<keyword id="KW-0131">Cell cycle</keyword>
<keyword id="KW-0132">Cell division</keyword>
<keyword id="KW-1003">Cell membrane</keyword>
<keyword id="KW-0966">Cell projection</keyword>
<keyword id="KW-0963">Cytoplasm</keyword>
<keyword id="KW-0968">Cytoplasmic vesicle</keyword>
<keyword id="KW-0254">Endocytosis</keyword>
<keyword id="KW-0333">Golgi apparatus</keyword>
<keyword id="KW-0446">Lipid-binding</keyword>
<keyword id="KW-0472">Membrane</keyword>
<keyword id="KW-0498">Mitosis</keyword>
<keyword id="KW-0597">Phosphoprotein</keyword>
<keyword id="KW-0653">Protein transport</keyword>
<keyword id="KW-1267">Proteomics identification</keyword>
<keyword id="KW-1185">Reference proteome</keyword>
<keyword id="KW-0728">SH3 domain</keyword>
<keyword id="KW-0813">Transport</keyword>
<keyword id="KW-0832">Ubl conjugation</keyword>
<comment type="function">
    <text evidence="6 7 8 11 12 13 17 19 20">Involved in endocytosis and intracellular vesicle trafficking, both during interphase and at the end of mitosis. Required for efficient progress through mitosis and cytokinesis. Required for normal formation of the cleavage furrow at the end of mitosis. Plays a role in endocytosis via clathrin-coated pits, but also clathrin-independent, actin-dependent fluid-phase endocytosis. Plays a role in macropinocytosis. Promotes internalization of TNFR. Promotes degradation of EGFR after EGF signaling. Stimulates the GTPase activity of DNM1. Promotes DNM1 oligomerization. Promotes activation of the Arp2/3 complex by WASL, and thereby plays a role in the reorganization of the F-actin cytoskeleton. Binds to membranes enriched in phosphatidylinositol 4,5-bisphosphate and promotes membrane tubulation. Has lower affinity for membranes enriched in phosphatidylinositol 3-phosphate.</text>
</comment>
<comment type="subunit">
    <text evidence="1 5 6 7 8 9 10 11 12 13 14 15 16 17 18">Homodimer, and homooligomer. Heterodimer with SNX18. Interacts with ITCH. Interacts (via SH3 domain) with TNK2, WASL and ACTR3. Identified in a complex with TNK2 and clathrin heavy chains. Identified in a complex with the AP-2 complex, clathrin and DNM2. Interacts (via SH3 domain) with DNM1 and DNM2. Identified in an oligomeric complex containing DNM1 and SNX9. Interacts with FCHSD1 (By similarity). Interacts with ADAM9 and ADAM15 cytoplasmic tails.</text>
</comment>
<comment type="interaction">
    <interactant intactId="EBI-77848">
        <id>Q9Y5X1</id>
    </interactant>
    <interactant intactId="EBI-77818">
        <id>Q13444</id>
        <label>ADAM15</label>
    </interactant>
    <organismsDiffer>false</organismsDiffer>
    <experiments>4</experiments>
</comment>
<comment type="interaction">
    <interactant intactId="EBI-77848">
        <id>Q9Y5X1</id>
    </interactant>
    <interactant intactId="EBI-723802">
        <id>Q6UW56</id>
        <label>ATRAID</label>
    </interactant>
    <organismsDiffer>false</organismsDiffer>
    <experiments>2</experiments>
</comment>
<comment type="interaction">
    <interactant intactId="EBI-77848">
        <id>Q9Y5X1</id>
    </interactant>
    <interactant intactId="EBI-713135">
        <id>Q05193</id>
        <label>DNM1</label>
    </interactant>
    <organismsDiffer>false</organismsDiffer>
    <experiments>3</experiments>
</comment>
<comment type="interaction">
    <interactant intactId="EBI-77848">
        <id>Q9Y5X1</id>
    </interactant>
    <interactant intactId="EBI-346547">
        <id>P50570</id>
        <label>DNM2</label>
    </interactant>
    <organismsDiffer>false</organismsDiffer>
    <experiments>7</experiments>
</comment>
<comment type="interaction">
    <interactant intactId="EBI-77848">
        <id>Q9Y5X1</id>
    </interactant>
    <interactant intactId="EBI-495538">
        <id>P48023</id>
        <label>FASLG</label>
    </interactant>
    <organismsDiffer>false</organismsDiffer>
    <experiments>2</experiments>
</comment>
<comment type="interaction">
    <interactant intactId="EBI-77848">
        <id>Q9Y5X1</id>
    </interactant>
    <interactant intactId="EBI-1564678">
        <id>Q96J02</id>
        <label>ITCH</label>
    </interactant>
    <organismsDiffer>false</organismsDiffer>
    <experiments>7</experiments>
</comment>
<comment type="interaction">
    <interactant intactId="EBI-77848">
        <id>Q9Y5X1</id>
    </interactant>
    <interactant intactId="EBI-6148898">
        <id>Q01968</id>
        <label>OCRL</label>
    </interactant>
    <organismsDiffer>false</organismsDiffer>
    <experiments>5</experiments>
</comment>
<comment type="interaction">
    <interactant intactId="EBI-77848">
        <id>Q9Y5X1</id>
    </interactant>
    <interactant intactId="EBI-2481535">
        <id>Q8WV41</id>
        <label>SNX33</label>
    </interactant>
    <organismsDiffer>false</organismsDiffer>
    <experiments>2</experiments>
</comment>
<comment type="interaction">
    <interactant intactId="EBI-77848">
        <id>Q9Y5X1</id>
    </interactant>
    <interactant intactId="EBI-77848">
        <id>Q9Y5X1</id>
        <label>SNX9</label>
    </interactant>
    <organismsDiffer>false</organismsDiffer>
    <experiments>5</experiments>
</comment>
<comment type="interaction">
    <interactant intactId="EBI-77848">
        <id>Q9Y5X1</id>
    </interactant>
    <interactant intactId="EBI-297487">
        <id>Q07889</id>
        <label>SOS1</label>
    </interactant>
    <organismsDiffer>false</organismsDiffer>
    <experiments>2</experiments>
</comment>
<comment type="interaction">
    <interactant intactId="EBI-77848">
        <id>Q9Y5X1</id>
    </interactant>
    <interactant intactId="EBI-298181">
        <id>Q07890</id>
        <label>SOS2</label>
    </interactant>
    <organismsDiffer>false</organismsDiffer>
    <experiments>2</experiments>
</comment>
<comment type="interaction">
    <interactant intactId="EBI-77848">
        <id>Q9Y5X1</id>
    </interactant>
    <interactant intactId="EBI-3390054">
        <id>P0CG48</id>
        <label>UBC</label>
    </interactant>
    <organismsDiffer>false</organismsDiffer>
    <experiments>2</experiments>
</comment>
<comment type="interaction">
    <interactant intactId="EBI-77848">
        <id>Q9Y5X1</id>
    </interactant>
    <interactant intactId="EBI-346375">
        <id>P42768</id>
        <label>WAS</label>
    </interactant>
    <organismsDiffer>false</organismsDiffer>
    <experiments>2</experiments>
</comment>
<comment type="interaction">
    <interactant intactId="EBI-77848">
        <id>Q9Y5X1</id>
    </interactant>
    <interactant intactId="EBI-957615">
        <id>O00401</id>
        <label>WASL</label>
    </interactant>
    <organismsDiffer>false</organismsDiffer>
    <experiments>2</experiments>
</comment>
<comment type="interaction">
    <interactant intactId="EBI-77848">
        <id>Q9Y5X1</id>
    </interactant>
    <interactant intactId="EBI-2529480">
        <id>B7UM88</id>
        <label>espF</label>
    </interactant>
    <organismsDiffer>true</organismsDiffer>
    <experiments>4</experiments>
</comment>
<comment type="interaction">
    <interactant intactId="EBI-77848">
        <id>Q9Y5X1</id>
    </interactant>
    <interactant intactId="EBI-2608563">
        <id>Q98143</id>
        <label>ORF21</label>
    </interactant>
    <organismsDiffer>true</organismsDiffer>
    <experiments>2</experiments>
</comment>
<comment type="interaction">
    <interactant intactId="EBI-77848">
        <id>Q9Y5X1</id>
    </interactant>
    <interactant intactId="EBI-457220">
        <id>Q17R13</id>
        <label>TNK2</label>
    </interactant>
    <organismsDiffer>true</organismsDiffer>
    <experiments>5</experiments>
</comment>
<comment type="subcellular location">
    <subcellularLocation>
        <location>Cytoplasmic vesicle membrane</location>
        <topology>Peripheral membrane protein</topology>
        <orientation>Cytoplasmic side</orientation>
    </subcellularLocation>
    <subcellularLocation>
        <location>Cell membrane</location>
        <topology>Peripheral membrane protein</topology>
        <orientation>Cytoplasmic side</orientation>
    </subcellularLocation>
    <subcellularLocation>
        <location>Cytoplasmic vesicle</location>
        <location>Clathrin-coated vesicle</location>
    </subcellularLocation>
    <subcellularLocation>
        <location>Golgi apparatus</location>
        <location>trans-Golgi network</location>
    </subcellularLocation>
    <subcellularLocation>
        <location>Cell projection</location>
        <location>Ruffle</location>
    </subcellularLocation>
    <subcellularLocation>
        <location>Cytoplasm</location>
    </subcellularLocation>
    <text>Localized at sites of endocytosis at the cell membrane. Detected on newly formed macropinosomes. Transiently recruited to clathrin-coated pits at a late stage of clathrin-coated vesicle formation. Colocalizes with the actin cytoskeleton at the cell membrane.</text>
</comment>
<comment type="tissue specificity">
    <text evidence="5">Widely expressed, with highest levels in heart and placenta, and lowest levels in thymus and peripheral blood leukocytes.</text>
</comment>
<comment type="domain">
    <text evidence="12">The PX domain mediates interaction with membranes enriched in phosphatidylinositol phosphate. Has high affinity for phosphatidylinositol 4,5-bisphosphate, but can also bind to membranes enriched in other phosphatidylinositol phosphates.</text>
</comment>
<comment type="PTM">
    <text evidence="18">Ubiquitinated by ITCH.</text>
</comment>
<comment type="PTM">
    <text>Phosphorylated on tyrosine residues by TNK2. Phosphorylation promotes its activity in the degradation of EGFR.</text>
</comment>
<comment type="similarity">
    <text evidence="21">Belongs to the sorting nexin family.</text>
</comment>
<feature type="chain" id="PRO_0000213852" description="Sorting nexin-9">
    <location>
        <begin position="1"/>
        <end position="595"/>
    </location>
</feature>
<feature type="domain" description="SH3" evidence="3">
    <location>
        <begin position="1"/>
        <end position="62"/>
    </location>
</feature>
<feature type="domain" description="PX" evidence="2">
    <location>
        <begin position="250"/>
        <end position="361"/>
    </location>
</feature>
<feature type="domain" description="BAR">
    <location>
        <begin position="392"/>
        <end position="595"/>
    </location>
</feature>
<feature type="region of interest" description="Disordered" evidence="4">
    <location>
        <begin position="91"/>
        <end position="201"/>
    </location>
</feature>
<feature type="region of interest" description="Critical for tubulation activity">
    <location>
        <begin position="201"/>
        <end position="213"/>
    </location>
</feature>
<feature type="compositionally biased region" description="Polar residues" evidence="4">
    <location>
        <begin position="111"/>
        <end position="121"/>
    </location>
</feature>
<feature type="compositionally biased region" description="Polar residues" evidence="4">
    <location>
        <begin position="135"/>
        <end position="145"/>
    </location>
</feature>
<feature type="compositionally biased region" description="Acidic residues" evidence="4">
    <location>
        <begin position="160"/>
        <end position="169"/>
    </location>
</feature>
<feature type="compositionally biased region" description="Polar residues" evidence="4">
    <location>
        <begin position="191"/>
        <end position="201"/>
    </location>
</feature>
<feature type="binding site" evidence="12 22">
    <location>
        <position position="286"/>
    </location>
    <ligand>
        <name>a 1,2-diacyl-sn-glycero-3-phospho-(1D-myo-inositol-4,5-bisphosphate)</name>
        <dbReference type="ChEBI" id="CHEBI:58456"/>
    </ligand>
</feature>
<feature type="binding site" evidence="12 22">
    <location>
        <position position="288"/>
    </location>
    <ligand>
        <name>a 1,2-diacyl-sn-glycero-3-phospho-(1D-myo-inositol-4,5-bisphosphate)</name>
        <dbReference type="ChEBI" id="CHEBI:58456"/>
    </ligand>
</feature>
<feature type="binding site" evidence="12 22">
    <location>
        <position position="327"/>
    </location>
    <ligand>
        <name>a 1,2-diacyl-sn-glycero-3-phospho-(1D-myo-inositol-4,5-bisphosphate)</name>
        <dbReference type="ChEBI" id="CHEBI:58456"/>
    </ligand>
</feature>
<feature type="modified residue" description="Phosphoserine" evidence="24">
    <location>
        <position position="116"/>
    </location>
</feature>
<feature type="modified residue" description="Phosphoserine" evidence="24">
    <location>
        <position position="121"/>
    </location>
</feature>
<feature type="modified residue" description="Phosphoserine" evidence="24">
    <location>
        <position position="197"/>
    </location>
</feature>
<feature type="modified residue" description="Phosphoserine" evidence="24">
    <location>
        <position position="200"/>
    </location>
</feature>
<feature type="modified residue" description="Phosphothreonine" evidence="24">
    <location>
        <position position="216"/>
    </location>
</feature>
<feature type="modified residue" description="Phosphotyrosine" evidence="1">
    <location>
        <position position="239"/>
    </location>
</feature>
<feature type="modified residue" description="N6-acetyllysine" evidence="23">
    <location>
        <position position="288"/>
    </location>
</feature>
<feature type="mutagenesis site" description="Abolishes membrane tubulation activity. Abolishes binding to phosphatidylinositol 3-phosphate, but not to phosphatidylinositol 4,5-bisphosphate; when associated with A-313." evidence="12">
    <original>Y</original>
    <variation>A</variation>
    <location>
        <position position="287"/>
    </location>
</feature>
<feature type="mutagenesis site" description="Abolishes binding to phosphatidylinositol 3-phosphate, but not to phosphatidylinositol 4,5-bisphosphate; when associated with A-287." evidence="12">
    <original>K</original>
    <variation>A</variation>
    <location>
        <position position="313"/>
    </location>
</feature>
<feature type="mutagenesis site" description="Strongly reduced membrane binding." evidence="12">
    <original>K</original>
    <variation>E</variation>
    <location>
        <position position="363"/>
    </location>
</feature>
<feature type="mutagenesis site" description="Loss of membrane binding." evidence="12">
    <original>KR</original>
    <variation>EE</variation>
    <location>
        <begin position="366"/>
        <end position="367"/>
    </location>
</feature>
<feature type="mutagenesis site" description="Abolishes membrane tubulation activity; when associated with E-528." evidence="12">
    <original>K</original>
    <variation>E</variation>
    <location>
        <position position="522"/>
    </location>
</feature>
<feature type="mutagenesis site" description="Abolishes membrane tubulation activity; when associated with E-522." evidence="12">
    <original>K</original>
    <variation>E</variation>
    <location>
        <position position="528"/>
    </location>
</feature>
<feature type="sequence conflict" description="In Ref. 5; AAH05022." evidence="21" ref="5">
    <original>Q</original>
    <variation>H</variation>
    <location>
        <position position="89"/>
    </location>
</feature>
<feature type="strand" evidence="29">
    <location>
        <begin position="3"/>
        <end position="9"/>
    </location>
</feature>
<feature type="turn" evidence="29">
    <location>
        <begin position="15"/>
        <end position="18"/>
    </location>
</feature>
<feature type="strand" evidence="29">
    <location>
        <begin position="27"/>
        <end position="33"/>
    </location>
</feature>
<feature type="strand" evidence="29">
    <location>
        <begin position="39"/>
        <end position="43"/>
    </location>
</feature>
<feature type="strand" evidence="29">
    <location>
        <begin position="49"/>
        <end position="53"/>
    </location>
</feature>
<feature type="helix" evidence="29">
    <location>
        <begin position="54"/>
        <end position="56"/>
    </location>
</feature>
<feature type="strand" evidence="29">
    <location>
        <begin position="57"/>
        <end position="59"/>
    </location>
</feature>
<feature type="turn" evidence="28">
    <location>
        <begin position="167"/>
        <end position="169"/>
    </location>
</feature>
<feature type="helix" evidence="28">
    <location>
        <begin position="175"/>
        <end position="180"/>
    </location>
</feature>
<feature type="helix" evidence="25">
    <location>
        <begin position="215"/>
        <end position="221"/>
    </location>
</feature>
<feature type="strand" evidence="27">
    <location>
        <begin position="232"/>
        <end position="237"/>
    </location>
</feature>
<feature type="strand" evidence="27">
    <location>
        <begin position="240"/>
        <end position="243"/>
    </location>
</feature>
<feature type="strand" evidence="27">
    <location>
        <begin position="252"/>
        <end position="255"/>
    </location>
</feature>
<feature type="helix" evidence="27">
    <location>
        <begin position="257"/>
        <end position="259"/>
    </location>
</feature>
<feature type="strand" evidence="27">
    <location>
        <begin position="260"/>
        <end position="262"/>
    </location>
</feature>
<feature type="strand" evidence="26">
    <location>
        <begin position="263"/>
        <end position="266"/>
    </location>
</feature>
<feature type="strand" evidence="27">
    <location>
        <begin position="271"/>
        <end position="276"/>
    </location>
</feature>
<feature type="turn" evidence="25">
    <location>
        <begin position="277"/>
        <end position="279"/>
    </location>
</feature>
<feature type="strand" evidence="27">
    <location>
        <begin position="283"/>
        <end position="286"/>
    </location>
</feature>
<feature type="helix" evidence="27">
    <location>
        <begin position="287"/>
        <end position="301"/>
    </location>
</feature>
<feature type="turn" evidence="27">
    <location>
        <begin position="302"/>
        <end position="304"/>
    </location>
</feature>
<feature type="helix" evidence="27">
    <location>
        <begin position="324"/>
        <end position="339"/>
    </location>
</feature>
<feature type="helix" evidence="27">
    <location>
        <begin position="344"/>
        <end position="346"/>
    </location>
</feature>
<feature type="helix" evidence="27">
    <location>
        <begin position="348"/>
        <end position="355"/>
    </location>
</feature>
<feature type="helix" evidence="27">
    <location>
        <begin position="359"/>
        <end position="370"/>
    </location>
</feature>
<feature type="helix" evidence="27">
    <location>
        <begin position="376"/>
        <end position="382"/>
    </location>
</feature>
<feature type="strand" evidence="27">
    <location>
        <begin position="383"/>
        <end position="387"/>
    </location>
</feature>
<feature type="helix" evidence="27">
    <location>
        <begin position="392"/>
        <end position="428"/>
    </location>
</feature>
<feature type="helix" evidence="27">
    <location>
        <begin position="430"/>
        <end position="450"/>
    </location>
</feature>
<feature type="helix" evidence="27">
    <location>
        <begin position="455"/>
        <end position="457"/>
    </location>
</feature>
<feature type="helix" evidence="27">
    <location>
        <begin position="458"/>
        <end position="480"/>
    </location>
</feature>
<feature type="helix" evidence="27">
    <location>
        <begin position="482"/>
        <end position="484"/>
    </location>
</feature>
<feature type="helix" evidence="27">
    <location>
        <begin position="486"/>
        <end position="500"/>
    </location>
</feature>
<feature type="helix" evidence="27">
    <location>
        <begin position="503"/>
        <end position="518"/>
    </location>
</feature>
<feature type="helix" evidence="27">
    <location>
        <begin position="520"/>
        <end position="525"/>
    </location>
</feature>
<feature type="helix" evidence="27">
    <location>
        <begin position="531"/>
        <end position="590"/>
    </location>
</feature>
<protein>
    <recommendedName>
        <fullName>Sorting nexin-9</fullName>
    </recommendedName>
    <alternativeName>
        <fullName>SH3 and PX domain-containing protein 1</fullName>
        <shortName>Protein SDP1</shortName>
    </alternativeName>
    <alternativeName>
        <fullName>SH3 and PX domain-containing protein 3A</fullName>
    </alternativeName>
</protein>
<gene>
    <name type="primary">SNX9</name>
    <name type="synonym">SH3PX1</name>
    <name type="synonym">SH3PXD3A</name>
</gene>
<organism>
    <name type="scientific">Homo sapiens</name>
    <name type="common">Human</name>
    <dbReference type="NCBI Taxonomy" id="9606"/>
    <lineage>
        <taxon>Eukaryota</taxon>
        <taxon>Metazoa</taxon>
        <taxon>Chordata</taxon>
        <taxon>Craniata</taxon>
        <taxon>Vertebrata</taxon>
        <taxon>Euteleostomi</taxon>
        <taxon>Mammalia</taxon>
        <taxon>Eutheria</taxon>
        <taxon>Euarchontoglires</taxon>
        <taxon>Primates</taxon>
        <taxon>Haplorrhini</taxon>
        <taxon>Catarrhini</taxon>
        <taxon>Hominidae</taxon>
        <taxon>Homo</taxon>
    </lineage>
</organism>
<dbReference type="EMBL" id="AF121859">
    <property type="protein sequence ID" value="AAD27832.1"/>
    <property type="molecule type" value="mRNA"/>
</dbReference>
<dbReference type="EMBL" id="AF131214">
    <property type="protein sequence ID" value="AAF04473.1"/>
    <property type="molecule type" value="mRNA"/>
</dbReference>
<dbReference type="EMBL" id="AF172847">
    <property type="protein sequence ID" value="AAL54871.1"/>
    <property type="molecule type" value="mRNA"/>
</dbReference>
<dbReference type="EMBL" id="AL035634">
    <property type="status" value="NOT_ANNOTATED_CDS"/>
    <property type="molecule type" value="Genomic_DNA"/>
</dbReference>
<dbReference type="EMBL" id="AL139330">
    <property type="status" value="NOT_ANNOTATED_CDS"/>
    <property type="molecule type" value="Genomic_DNA"/>
</dbReference>
<dbReference type="EMBL" id="AL391863">
    <property type="status" value="NOT_ANNOTATED_CDS"/>
    <property type="molecule type" value="Genomic_DNA"/>
</dbReference>
<dbReference type="EMBL" id="BC001084">
    <property type="protein sequence ID" value="AAH01084.3"/>
    <property type="molecule type" value="mRNA"/>
</dbReference>
<dbReference type="EMBL" id="BC005022">
    <property type="protein sequence ID" value="AAH05022.1"/>
    <property type="molecule type" value="mRNA"/>
</dbReference>
<dbReference type="EMBL" id="AF076957">
    <property type="protein sequence ID" value="AAD43001.1"/>
    <property type="molecule type" value="mRNA"/>
</dbReference>
<dbReference type="CCDS" id="CCDS5253.1"/>
<dbReference type="RefSeq" id="NP_057308.1">
    <property type="nucleotide sequence ID" value="NM_016224.5"/>
</dbReference>
<dbReference type="PDB" id="2RAI">
    <property type="method" value="X-ray"/>
    <property type="resolution" value="3.20 A"/>
    <property type="chains" value="A/B=204-595"/>
</dbReference>
<dbReference type="PDB" id="2RAJ">
    <property type="method" value="X-ray"/>
    <property type="resolution" value="2.45 A"/>
    <property type="chains" value="A=204-595"/>
</dbReference>
<dbReference type="PDB" id="2RAK">
    <property type="method" value="X-ray"/>
    <property type="resolution" value="3.00 A"/>
    <property type="chains" value="A=204-595"/>
</dbReference>
<dbReference type="PDB" id="3DYT">
    <property type="method" value="X-ray"/>
    <property type="resolution" value="2.08 A"/>
    <property type="chains" value="A=230-595"/>
</dbReference>
<dbReference type="PDB" id="3DYU">
    <property type="method" value="X-ray"/>
    <property type="resolution" value="4.10 A"/>
    <property type="chains" value="A/B/C=230-595"/>
</dbReference>
<dbReference type="PDB" id="3LGE">
    <property type="method" value="X-ray"/>
    <property type="resolution" value="2.20 A"/>
    <property type="chains" value="E/F/G/H=152-182"/>
</dbReference>
<dbReference type="PDB" id="7OJ9">
    <property type="method" value="NMR"/>
    <property type="chains" value="A=1-64"/>
</dbReference>
<dbReference type="PDBsum" id="2RAI"/>
<dbReference type="PDBsum" id="2RAJ"/>
<dbReference type="PDBsum" id="2RAK"/>
<dbReference type="PDBsum" id="3DYT"/>
<dbReference type="PDBsum" id="3DYU"/>
<dbReference type="PDBsum" id="3LGE"/>
<dbReference type="PDBsum" id="7OJ9"/>
<dbReference type="SASBDB" id="Q9Y5X1"/>
<dbReference type="SMR" id="Q9Y5X1"/>
<dbReference type="BioGRID" id="119535">
    <property type="interactions" value="153"/>
</dbReference>
<dbReference type="DIP" id="DIP-30997N"/>
<dbReference type="FunCoup" id="Q9Y5X1">
    <property type="interactions" value="1562"/>
</dbReference>
<dbReference type="IntAct" id="Q9Y5X1">
    <property type="interactions" value="105"/>
</dbReference>
<dbReference type="MINT" id="Q9Y5X1"/>
<dbReference type="STRING" id="9606.ENSP00000376024"/>
<dbReference type="GlyGen" id="Q9Y5X1">
    <property type="glycosylation" value="1 site, 1 O-linked glycan (1 site)"/>
</dbReference>
<dbReference type="iPTMnet" id="Q9Y5X1"/>
<dbReference type="MetOSite" id="Q9Y5X1"/>
<dbReference type="PhosphoSitePlus" id="Q9Y5X1"/>
<dbReference type="BioMuta" id="SNX9"/>
<dbReference type="DMDM" id="12643956"/>
<dbReference type="jPOST" id="Q9Y5X1"/>
<dbReference type="MassIVE" id="Q9Y5X1"/>
<dbReference type="PaxDb" id="9606-ENSP00000376024"/>
<dbReference type="PeptideAtlas" id="Q9Y5X1"/>
<dbReference type="ProteomicsDB" id="86526"/>
<dbReference type="Pumba" id="Q9Y5X1"/>
<dbReference type="Antibodypedia" id="33429">
    <property type="antibodies" value="420 antibodies from 33 providers"/>
</dbReference>
<dbReference type="DNASU" id="51429"/>
<dbReference type="Ensembl" id="ENST00000392185.8">
    <property type="protein sequence ID" value="ENSP00000376024.3"/>
    <property type="gene ID" value="ENSG00000130340.17"/>
</dbReference>
<dbReference type="Ensembl" id="ENST00000679814.1">
    <property type="protein sequence ID" value="ENSP00000506326.1"/>
    <property type="gene ID" value="ENSG00000130340.17"/>
</dbReference>
<dbReference type="GeneID" id="51429"/>
<dbReference type="KEGG" id="hsa:51429"/>
<dbReference type="MANE-Select" id="ENST00000392185.8">
    <property type="protein sequence ID" value="ENSP00000376024.3"/>
    <property type="RefSeq nucleotide sequence ID" value="NM_016224.5"/>
    <property type="RefSeq protein sequence ID" value="NP_057308.1"/>
</dbReference>
<dbReference type="UCSC" id="uc003qqv.3">
    <property type="organism name" value="human"/>
</dbReference>
<dbReference type="AGR" id="HGNC:14973"/>
<dbReference type="CTD" id="51429"/>
<dbReference type="DisGeNET" id="51429"/>
<dbReference type="GeneCards" id="SNX9"/>
<dbReference type="HGNC" id="HGNC:14973">
    <property type="gene designation" value="SNX9"/>
</dbReference>
<dbReference type="HPA" id="ENSG00000130340">
    <property type="expression patterns" value="Low tissue specificity"/>
</dbReference>
<dbReference type="MIM" id="605952">
    <property type="type" value="gene"/>
</dbReference>
<dbReference type="neXtProt" id="NX_Q9Y5X1"/>
<dbReference type="OpenTargets" id="ENSG00000130340"/>
<dbReference type="PharmGKB" id="PA37949"/>
<dbReference type="VEuPathDB" id="HostDB:ENSG00000130340"/>
<dbReference type="eggNOG" id="KOG2528">
    <property type="taxonomic scope" value="Eukaryota"/>
</dbReference>
<dbReference type="GeneTree" id="ENSGT00940000156557"/>
<dbReference type="HOGENOM" id="CLU_021494_2_0_1"/>
<dbReference type="InParanoid" id="Q9Y5X1"/>
<dbReference type="OMA" id="FDSAPMR"/>
<dbReference type="OrthoDB" id="10254720at2759"/>
<dbReference type="PAN-GO" id="Q9Y5X1">
    <property type="GO annotations" value="7 GO annotations based on evolutionary models"/>
</dbReference>
<dbReference type="PhylomeDB" id="Q9Y5X1"/>
<dbReference type="TreeFam" id="TF314082"/>
<dbReference type="PathwayCommons" id="Q9Y5X1"/>
<dbReference type="Reactome" id="R-HSA-432722">
    <property type="pathway name" value="Golgi Associated Vesicle Biogenesis"/>
</dbReference>
<dbReference type="Reactome" id="R-HSA-8856828">
    <property type="pathway name" value="Clathrin-mediated endocytosis"/>
</dbReference>
<dbReference type="SignaLink" id="Q9Y5X1"/>
<dbReference type="SIGNOR" id="Q9Y5X1"/>
<dbReference type="BioGRID-ORCS" id="51429">
    <property type="hits" value="13 hits in 1163 CRISPR screens"/>
</dbReference>
<dbReference type="CD-CODE" id="FB4E32DD">
    <property type="entry name" value="Presynaptic clusters and postsynaptic densities"/>
</dbReference>
<dbReference type="ChiTaRS" id="SNX9">
    <property type="organism name" value="human"/>
</dbReference>
<dbReference type="EvolutionaryTrace" id="Q9Y5X1"/>
<dbReference type="GeneWiki" id="SNX9"/>
<dbReference type="GenomeRNAi" id="51429"/>
<dbReference type="Pharos" id="Q9Y5X1">
    <property type="development level" value="Tbio"/>
</dbReference>
<dbReference type="PRO" id="PR:Q9Y5X1"/>
<dbReference type="Proteomes" id="UP000005640">
    <property type="component" value="Chromosome 6"/>
</dbReference>
<dbReference type="RNAct" id="Q9Y5X1">
    <property type="molecule type" value="protein"/>
</dbReference>
<dbReference type="Bgee" id="ENSG00000130340">
    <property type="expression patterns" value="Expressed in cartilage tissue and 185 other cell types or tissues"/>
</dbReference>
<dbReference type="ExpressionAtlas" id="Q9Y5X1">
    <property type="expression patterns" value="baseline and differential"/>
</dbReference>
<dbReference type="GO" id="GO:0005905">
    <property type="term" value="C:clathrin-coated pit"/>
    <property type="evidence" value="ECO:0000314"/>
    <property type="project" value="UniProtKB"/>
</dbReference>
<dbReference type="GO" id="GO:0030136">
    <property type="term" value="C:clathrin-coated vesicle"/>
    <property type="evidence" value="ECO:0007669"/>
    <property type="project" value="UniProtKB-SubCell"/>
</dbReference>
<dbReference type="GO" id="GO:0032437">
    <property type="term" value="C:cuticular plate"/>
    <property type="evidence" value="ECO:0007669"/>
    <property type="project" value="Ensembl"/>
</dbReference>
<dbReference type="GO" id="GO:0005737">
    <property type="term" value="C:cytoplasm"/>
    <property type="evidence" value="ECO:0000314"/>
    <property type="project" value="UniProtKB"/>
</dbReference>
<dbReference type="GO" id="GO:0031410">
    <property type="term" value="C:cytoplasmic vesicle"/>
    <property type="evidence" value="ECO:0000314"/>
    <property type="project" value="UniProtKB"/>
</dbReference>
<dbReference type="GO" id="GO:0030659">
    <property type="term" value="C:cytoplasmic vesicle membrane"/>
    <property type="evidence" value="ECO:0000314"/>
    <property type="project" value="UniProtKB"/>
</dbReference>
<dbReference type="GO" id="GO:0005829">
    <property type="term" value="C:cytosol"/>
    <property type="evidence" value="ECO:0000314"/>
    <property type="project" value="HPA"/>
</dbReference>
<dbReference type="GO" id="GO:0070062">
    <property type="term" value="C:extracellular exosome"/>
    <property type="evidence" value="ECO:0007005"/>
    <property type="project" value="UniProtKB"/>
</dbReference>
<dbReference type="GO" id="GO:0005886">
    <property type="term" value="C:plasma membrane"/>
    <property type="evidence" value="ECO:0000314"/>
    <property type="project" value="UniProtKB"/>
</dbReference>
<dbReference type="GO" id="GO:0098793">
    <property type="term" value="C:presynapse"/>
    <property type="evidence" value="ECO:0007669"/>
    <property type="project" value="Ensembl"/>
</dbReference>
<dbReference type="GO" id="GO:0001726">
    <property type="term" value="C:ruffle"/>
    <property type="evidence" value="ECO:0007669"/>
    <property type="project" value="UniProtKB-SubCell"/>
</dbReference>
<dbReference type="GO" id="GO:0005802">
    <property type="term" value="C:trans-Golgi network"/>
    <property type="evidence" value="ECO:0000314"/>
    <property type="project" value="UniProtKB"/>
</dbReference>
<dbReference type="GO" id="GO:0005545">
    <property type="term" value="F:1-phosphatidylinositol binding"/>
    <property type="evidence" value="ECO:0000314"/>
    <property type="project" value="UniProtKB"/>
</dbReference>
<dbReference type="GO" id="GO:0071933">
    <property type="term" value="F:Arp2/3 complex binding"/>
    <property type="evidence" value="ECO:0000314"/>
    <property type="project" value="UniProtKB"/>
</dbReference>
<dbReference type="GO" id="GO:0045296">
    <property type="term" value="F:cadherin binding"/>
    <property type="evidence" value="ECO:0007005"/>
    <property type="project" value="BHF-UCL"/>
</dbReference>
<dbReference type="GO" id="GO:0042802">
    <property type="term" value="F:identical protein binding"/>
    <property type="evidence" value="ECO:0000353"/>
    <property type="project" value="IntAct"/>
</dbReference>
<dbReference type="GO" id="GO:0035091">
    <property type="term" value="F:phosphatidylinositol binding"/>
    <property type="evidence" value="ECO:0000314"/>
    <property type="project" value="UniProtKB"/>
</dbReference>
<dbReference type="GO" id="GO:0042803">
    <property type="term" value="F:protein homodimerization activity"/>
    <property type="evidence" value="ECO:0000353"/>
    <property type="project" value="UniProtKB"/>
</dbReference>
<dbReference type="GO" id="GO:0031625">
    <property type="term" value="F:ubiquitin protein ligase binding"/>
    <property type="evidence" value="ECO:0000353"/>
    <property type="project" value="UniProtKB"/>
</dbReference>
<dbReference type="GO" id="GO:0036089">
    <property type="term" value="P:cleavage furrow formation"/>
    <property type="evidence" value="ECO:0000315"/>
    <property type="project" value="UniProtKB"/>
</dbReference>
<dbReference type="GO" id="GO:0006897">
    <property type="term" value="P:endocytosis"/>
    <property type="evidence" value="ECO:0000315"/>
    <property type="project" value="UniProtKB"/>
</dbReference>
<dbReference type="GO" id="GO:0016197">
    <property type="term" value="P:endosomal transport"/>
    <property type="evidence" value="ECO:0000315"/>
    <property type="project" value="UniProtKB"/>
</dbReference>
<dbReference type="GO" id="GO:0006886">
    <property type="term" value="P:intracellular protein transport"/>
    <property type="evidence" value="ECO:0000315"/>
    <property type="project" value="UniProtKB"/>
</dbReference>
<dbReference type="GO" id="GO:0060988">
    <property type="term" value="P:lipid tube assembly"/>
    <property type="evidence" value="ECO:0000314"/>
    <property type="project" value="UniProtKB"/>
</dbReference>
<dbReference type="GO" id="GO:0000281">
    <property type="term" value="P:mitotic cytokinesis"/>
    <property type="evidence" value="ECO:0000315"/>
    <property type="project" value="UniProtKB"/>
</dbReference>
<dbReference type="GO" id="GO:0097320">
    <property type="term" value="P:plasma membrane tubulation"/>
    <property type="evidence" value="ECO:0000314"/>
    <property type="project" value="UniProtKB"/>
</dbReference>
<dbReference type="GO" id="GO:0030838">
    <property type="term" value="P:positive regulation of actin filament polymerization"/>
    <property type="evidence" value="ECO:0000250"/>
    <property type="project" value="UniProtKB"/>
</dbReference>
<dbReference type="GO" id="GO:0043547">
    <property type="term" value="P:positive regulation of GTPase activity"/>
    <property type="evidence" value="ECO:0000314"/>
    <property type="project" value="UniProtKB"/>
</dbReference>
<dbReference type="GO" id="GO:0051044">
    <property type="term" value="P:positive regulation of membrane protein ectodomain proteolysis"/>
    <property type="evidence" value="ECO:0000314"/>
    <property type="project" value="UniProtKB"/>
</dbReference>
<dbReference type="GO" id="GO:0045860">
    <property type="term" value="P:positive regulation of protein kinase activity"/>
    <property type="evidence" value="ECO:0000314"/>
    <property type="project" value="UniProtKB"/>
</dbReference>
<dbReference type="GO" id="GO:0065003">
    <property type="term" value="P:protein-containing complex assembly"/>
    <property type="evidence" value="ECO:0000314"/>
    <property type="project" value="UniProtKB"/>
</dbReference>
<dbReference type="GO" id="GO:0006898">
    <property type="term" value="P:receptor-mediated endocytosis"/>
    <property type="evidence" value="ECO:0000315"/>
    <property type="project" value="UniProtKB"/>
</dbReference>
<dbReference type="GO" id="GO:1900242">
    <property type="term" value="P:regulation of synaptic vesicle endocytosis"/>
    <property type="evidence" value="ECO:0007669"/>
    <property type="project" value="Ensembl"/>
</dbReference>
<dbReference type="CDD" id="cd07668">
    <property type="entry name" value="BAR_SNX9"/>
    <property type="match status" value="1"/>
</dbReference>
<dbReference type="CDD" id="cd07285">
    <property type="entry name" value="PX_SNX9"/>
    <property type="match status" value="1"/>
</dbReference>
<dbReference type="CDD" id="cd11898">
    <property type="entry name" value="SH3_SNX9"/>
    <property type="match status" value="1"/>
</dbReference>
<dbReference type="FunFam" id="1.20.1270.60:FF:000032">
    <property type="entry name" value="Sorting nexin"/>
    <property type="match status" value="1"/>
</dbReference>
<dbReference type="FunFam" id="2.30.30.40:FF:000199">
    <property type="entry name" value="Sorting nexin"/>
    <property type="match status" value="1"/>
</dbReference>
<dbReference type="FunFam" id="3.30.1520.10:FF:000004">
    <property type="entry name" value="Sorting nexin"/>
    <property type="match status" value="1"/>
</dbReference>
<dbReference type="Gene3D" id="1.20.1270.60">
    <property type="entry name" value="Arfaptin homology (AH) domain/BAR domain"/>
    <property type="match status" value="1"/>
</dbReference>
<dbReference type="Gene3D" id="3.30.1520.10">
    <property type="entry name" value="Phox-like domain"/>
    <property type="match status" value="1"/>
</dbReference>
<dbReference type="Gene3D" id="2.30.30.40">
    <property type="entry name" value="SH3 Domains"/>
    <property type="match status" value="1"/>
</dbReference>
<dbReference type="InterPro" id="IPR027267">
    <property type="entry name" value="AH/BAR_dom_sf"/>
</dbReference>
<dbReference type="InterPro" id="IPR001683">
    <property type="entry name" value="PX_dom"/>
</dbReference>
<dbReference type="InterPro" id="IPR036871">
    <property type="entry name" value="PX_dom_sf"/>
</dbReference>
<dbReference type="InterPro" id="IPR036028">
    <property type="entry name" value="SH3-like_dom_sf"/>
</dbReference>
<dbReference type="InterPro" id="IPR001452">
    <property type="entry name" value="SH3_domain"/>
</dbReference>
<dbReference type="InterPro" id="IPR037425">
    <property type="entry name" value="SNX9_BAR"/>
</dbReference>
<dbReference type="InterPro" id="IPR014536">
    <property type="entry name" value="Snx9_fam"/>
</dbReference>
<dbReference type="InterPro" id="IPR037426">
    <property type="entry name" value="SNX9_PX"/>
</dbReference>
<dbReference type="InterPro" id="IPR035558">
    <property type="entry name" value="SNX9_SH3"/>
</dbReference>
<dbReference type="InterPro" id="IPR019497">
    <property type="entry name" value="Sorting_nexin_WASP-bd-dom"/>
</dbReference>
<dbReference type="PANTHER" id="PTHR45827">
    <property type="entry name" value="SORTING NEXIN"/>
    <property type="match status" value="1"/>
</dbReference>
<dbReference type="PANTHER" id="PTHR45827:SF2">
    <property type="entry name" value="SORTING NEXIN-9"/>
    <property type="match status" value="1"/>
</dbReference>
<dbReference type="Pfam" id="PF10456">
    <property type="entry name" value="BAR_3_WASP_bdg"/>
    <property type="match status" value="1"/>
</dbReference>
<dbReference type="Pfam" id="PF00787">
    <property type="entry name" value="PX"/>
    <property type="match status" value="1"/>
</dbReference>
<dbReference type="Pfam" id="PF07653">
    <property type="entry name" value="SH3_2"/>
    <property type="match status" value="1"/>
</dbReference>
<dbReference type="PIRSF" id="PIRSF027744">
    <property type="entry name" value="Snx9"/>
    <property type="match status" value="1"/>
</dbReference>
<dbReference type="SMART" id="SM00312">
    <property type="entry name" value="PX"/>
    <property type="match status" value="1"/>
</dbReference>
<dbReference type="SMART" id="SM00326">
    <property type="entry name" value="SH3"/>
    <property type="match status" value="1"/>
</dbReference>
<dbReference type="SUPFAM" id="SSF64268">
    <property type="entry name" value="PX domain"/>
    <property type="match status" value="1"/>
</dbReference>
<dbReference type="SUPFAM" id="SSF50044">
    <property type="entry name" value="SH3-domain"/>
    <property type="match status" value="1"/>
</dbReference>
<dbReference type="PROSITE" id="PS50195">
    <property type="entry name" value="PX"/>
    <property type="match status" value="1"/>
</dbReference>
<dbReference type="PROSITE" id="PS50002">
    <property type="entry name" value="SH3"/>
    <property type="match status" value="1"/>
</dbReference>
<sequence length="595" mass="66592">MATKARVMYDFAAEPGNNELTVNEGEIITITNPDVGGGWLEGRNIKGERGLVPTDYVEILPSDGKDQFSCGNSVADQAFLDSLSASTAQASSSAASNNHQVGSGNDPWSAWSASKSGNWESSEGWGAQPEGAGAQRNTNTPNNWDTAFGHPQAYQGPATGDDDDWDEDWDGPKSSSYFKDSESADAGGAQRGNSRASSSSMKIPLNKFPGFAKPGTEQYLLAKQLAKPKEKIPIIVGDYGPMWVYPTSTFDCVVADPRKGSKMYGLKSYIEYQLTPTNTNRSVNHRYKHFDWLYERLLVKFGSAIPIPSLPDKQVTGRFEEEFIKMRMERLQAWMTRMCRHPVISESEVFQQFLNFRDEKEWKTGKRKAERDELAGVMIFSTMEPEAPDLDLVEIEQKCEAVGKFTKAMDDGVKELLTVGQEHWKRCTGPLPKEYQKIGKALQSLATVFSSSGYQGETDLNDAITEAGKTYEEIASLVAEQPKKDLHFLMECNHEYKGFLGCFPDIIGTHKGAIEKVKESDKLVATSKITLQDKQNMVKRVSIMSYALQAEMNHFHSNRIYDYNSVIRLYLEQQVQFYETIAEKLRQALSRFPVM</sequence>
<proteinExistence type="evidence at protein level"/>
<name>SNX9_HUMAN</name>